<protein>
    <recommendedName>
        <fullName evidence="1">Divalent metal cation transporter MntH</fullName>
    </recommendedName>
</protein>
<gene>
    <name evidence="1" type="primary">mntH</name>
    <name type="ordered locus">mlr2501</name>
</gene>
<keyword id="KW-0997">Cell inner membrane</keyword>
<keyword id="KW-1003">Cell membrane</keyword>
<keyword id="KW-0406">Ion transport</keyword>
<keyword id="KW-0472">Membrane</keyword>
<keyword id="KW-0769">Symport</keyword>
<keyword id="KW-0812">Transmembrane</keyword>
<keyword id="KW-1133">Transmembrane helix</keyword>
<keyword id="KW-0813">Transport</keyword>
<name>MNTH_RHILO</name>
<sequence>MSDAEATAPRSSWRFAGRDEDDQPSLREVNSTIAVPSSGVWFRRLFAFMGPGYMVSVGYMDPGNWATDLAGGAQFGYTLLFVIMLSNLMAILLQALAARLGIATGRDLAQACRAYYPRPVNFVLWIACELAIIACDLAEVIGTAIALKLLFGIPLIGGAILTALDAFLVLLLMNKGFRYLEAFVIALLIIIFSCFAIQIFVAAPPAGTILHSMFVPSSEIVTNPAMLYIAIGIIGATVMPHNLYLHSSIVQTRAYERTEKGKRDAIKWATTDSTIALMLALFVNAAILIVSAVAFHNTGHQDVAEIDQAFELLSPLLGLGIASILFAVALLASGLNSTVTATLAGQIIMEGFLRLRIPNWARRLLTRGLAIVPVVVVTALYGEKGTGQLLVFSQVILSMQLPFAVVPLVQFVSDKKKMGNLAIPRGVAALAWVVAAIILVLNFKLLYDTLFGVG</sequence>
<comment type="function">
    <text evidence="1">H(+)-stimulated, divalent metal cation uptake system.</text>
</comment>
<comment type="subcellular location">
    <subcellularLocation>
        <location evidence="1">Cell inner membrane</location>
        <topology evidence="1">Multi-pass membrane protein</topology>
    </subcellularLocation>
</comment>
<comment type="similarity">
    <text evidence="1">Belongs to the NRAMP family.</text>
</comment>
<dbReference type="EMBL" id="BA000012">
    <property type="protein sequence ID" value="BAB49617.1"/>
    <property type="molecule type" value="Genomic_DNA"/>
</dbReference>
<dbReference type="RefSeq" id="WP_010910969.1">
    <property type="nucleotide sequence ID" value="NC_002678.2"/>
</dbReference>
<dbReference type="SMR" id="Q98I99"/>
<dbReference type="KEGG" id="mlo:mlr2501"/>
<dbReference type="PATRIC" id="fig|266835.9.peg.2012"/>
<dbReference type="eggNOG" id="COG1914">
    <property type="taxonomic scope" value="Bacteria"/>
</dbReference>
<dbReference type="HOGENOM" id="CLU_020088_2_0_5"/>
<dbReference type="Proteomes" id="UP000000552">
    <property type="component" value="Chromosome"/>
</dbReference>
<dbReference type="GO" id="GO:0005886">
    <property type="term" value="C:plasma membrane"/>
    <property type="evidence" value="ECO:0007669"/>
    <property type="project" value="UniProtKB-SubCell"/>
</dbReference>
<dbReference type="GO" id="GO:0015086">
    <property type="term" value="F:cadmium ion transmembrane transporter activity"/>
    <property type="evidence" value="ECO:0007669"/>
    <property type="project" value="TreeGrafter"/>
</dbReference>
<dbReference type="GO" id="GO:0005384">
    <property type="term" value="F:manganese ion transmembrane transporter activity"/>
    <property type="evidence" value="ECO:0007669"/>
    <property type="project" value="TreeGrafter"/>
</dbReference>
<dbReference type="GO" id="GO:0046872">
    <property type="term" value="F:metal ion binding"/>
    <property type="evidence" value="ECO:0007669"/>
    <property type="project" value="UniProtKB-UniRule"/>
</dbReference>
<dbReference type="GO" id="GO:0015293">
    <property type="term" value="F:symporter activity"/>
    <property type="evidence" value="ECO:0007669"/>
    <property type="project" value="UniProtKB-UniRule"/>
</dbReference>
<dbReference type="GO" id="GO:0034755">
    <property type="term" value="P:iron ion transmembrane transport"/>
    <property type="evidence" value="ECO:0007669"/>
    <property type="project" value="TreeGrafter"/>
</dbReference>
<dbReference type="HAMAP" id="MF_00221">
    <property type="entry name" value="NRAMP"/>
    <property type="match status" value="1"/>
</dbReference>
<dbReference type="InterPro" id="IPR001046">
    <property type="entry name" value="NRAMP_fam"/>
</dbReference>
<dbReference type="NCBIfam" id="TIGR01197">
    <property type="entry name" value="nramp"/>
    <property type="match status" value="1"/>
</dbReference>
<dbReference type="NCBIfam" id="NF037982">
    <property type="entry name" value="Nramp_1"/>
    <property type="match status" value="1"/>
</dbReference>
<dbReference type="NCBIfam" id="NF001923">
    <property type="entry name" value="PRK00701.1"/>
    <property type="match status" value="1"/>
</dbReference>
<dbReference type="PANTHER" id="PTHR11706:SF33">
    <property type="entry name" value="NATURAL RESISTANCE-ASSOCIATED MACROPHAGE PROTEIN 2"/>
    <property type="match status" value="1"/>
</dbReference>
<dbReference type="PANTHER" id="PTHR11706">
    <property type="entry name" value="SOLUTE CARRIER PROTEIN FAMILY 11 MEMBER"/>
    <property type="match status" value="1"/>
</dbReference>
<dbReference type="Pfam" id="PF01566">
    <property type="entry name" value="Nramp"/>
    <property type="match status" value="1"/>
</dbReference>
<dbReference type="PRINTS" id="PR00447">
    <property type="entry name" value="NATRESASSCMP"/>
</dbReference>
<accession>Q98I99</accession>
<proteinExistence type="inferred from homology"/>
<evidence type="ECO:0000255" key="1">
    <source>
        <dbReference type="HAMAP-Rule" id="MF_00221"/>
    </source>
</evidence>
<evidence type="ECO:0000256" key="2">
    <source>
        <dbReference type="SAM" id="MobiDB-lite"/>
    </source>
</evidence>
<reference key="1">
    <citation type="journal article" date="2000" name="DNA Res.">
        <title>Complete genome structure of the nitrogen-fixing symbiotic bacterium Mesorhizobium loti.</title>
        <authorList>
            <person name="Kaneko T."/>
            <person name="Nakamura Y."/>
            <person name="Sato S."/>
            <person name="Asamizu E."/>
            <person name="Kato T."/>
            <person name="Sasamoto S."/>
            <person name="Watanabe A."/>
            <person name="Idesawa K."/>
            <person name="Ishikawa A."/>
            <person name="Kawashima K."/>
            <person name="Kimura T."/>
            <person name="Kishida Y."/>
            <person name="Kiyokawa C."/>
            <person name="Kohara M."/>
            <person name="Matsumoto M."/>
            <person name="Matsuno A."/>
            <person name="Mochizuki Y."/>
            <person name="Nakayama S."/>
            <person name="Nakazaki N."/>
            <person name="Shimpo S."/>
            <person name="Sugimoto M."/>
            <person name="Takeuchi C."/>
            <person name="Yamada M."/>
            <person name="Tabata S."/>
        </authorList>
    </citation>
    <scope>NUCLEOTIDE SEQUENCE [LARGE SCALE GENOMIC DNA]</scope>
    <source>
        <strain>LMG 29417 / CECT 9101 / MAFF 303099</strain>
    </source>
</reference>
<feature type="chain" id="PRO_0000212631" description="Divalent metal cation transporter MntH">
    <location>
        <begin position="1"/>
        <end position="454"/>
    </location>
</feature>
<feature type="transmembrane region" description="Helical" evidence="1">
    <location>
        <begin position="45"/>
        <end position="65"/>
    </location>
</feature>
<feature type="transmembrane region" description="Helical" evidence="1">
    <location>
        <begin position="78"/>
        <end position="98"/>
    </location>
</feature>
<feature type="transmembrane region" description="Helical" evidence="1">
    <location>
        <begin position="122"/>
        <end position="142"/>
    </location>
</feature>
<feature type="transmembrane region" description="Helical" evidence="1">
    <location>
        <begin position="153"/>
        <end position="173"/>
    </location>
</feature>
<feature type="transmembrane region" description="Helical" evidence="1">
    <location>
        <begin position="182"/>
        <end position="202"/>
    </location>
</feature>
<feature type="transmembrane region" description="Helical" evidence="1">
    <location>
        <begin position="220"/>
        <end position="240"/>
    </location>
</feature>
<feature type="transmembrane region" description="Helical" evidence="1">
    <location>
        <begin position="275"/>
        <end position="295"/>
    </location>
</feature>
<feature type="transmembrane region" description="Helical" evidence="1">
    <location>
        <begin position="312"/>
        <end position="332"/>
    </location>
</feature>
<feature type="transmembrane region" description="Helical" evidence="1">
    <location>
        <begin position="368"/>
        <end position="388"/>
    </location>
</feature>
<feature type="transmembrane region" description="Helical" evidence="1">
    <location>
        <begin position="389"/>
        <end position="409"/>
    </location>
</feature>
<feature type="transmembrane region" description="Helical" evidence="1">
    <location>
        <begin position="426"/>
        <end position="446"/>
    </location>
</feature>
<feature type="region of interest" description="Disordered" evidence="2">
    <location>
        <begin position="1"/>
        <end position="21"/>
    </location>
</feature>
<organism>
    <name type="scientific">Mesorhizobium japonicum (strain LMG 29417 / CECT 9101 / MAFF 303099)</name>
    <name type="common">Mesorhizobium loti (strain MAFF 303099)</name>
    <dbReference type="NCBI Taxonomy" id="266835"/>
    <lineage>
        <taxon>Bacteria</taxon>
        <taxon>Pseudomonadati</taxon>
        <taxon>Pseudomonadota</taxon>
        <taxon>Alphaproteobacteria</taxon>
        <taxon>Hyphomicrobiales</taxon>
        <taxon>Phyllobacteriaceae</taxon>
        <taxon>Mesorhizobium</taxon>
    </lineage>
</organism>